<proteinExistence type="inferred from homology"/>
<protein>
    <recommendedName>
        <fullName evidence="1">Large ribosomal subunit protein uL10</fullName>
    </recommendedName>
    <alternativeName>
        <fullName evidence="2">50S ribosomal protein L10</fullName>
    </alternativeName>
</protein>
<reference key="1">
    <citation type="journal article" date="2007" name="PLoS Genet.">
        <title>Patterns and implications of gene gain and loss in the evolution of Prochlorococcus.</title>
        <authorList>
            <person name="Kettler G.C."/>
            <person name="Martiny A.C."/>
            <person name="Huang K."/>
            <person name="Zucker J."/>
            <person name="Coleman M.L."/>
            <person name="Rodrigue S."/>
            <person name="Chen F."/>
            <person name="Lapidus A."/>
            <person name="Ferriera S."/>
            <person name="Johnson J."/>
            <person name="Steglich C."/>
            <person name="Church G.M."/>
            <person name="Richardson P."/>
            <person name="Chisholm S.W."/>
        </authorList>
    </citation>
    <scope>NUCLEOTIDE SEQUENCE [LARGE SCALE GENOMIC DNA]</scope>
    <source>
        <strain>NATL1A</strain>
    </source>
</reference>
<keyword id="KW-0687">Ribonucleoprotein</keyword>
<keyword id="KW-0689">Ribosomal protein</keyword>
<keyword id="KW-0694">RNA-binding</keyword>
<keyword id="KW-0699">rRNA-binding</keyword>
<sequence>MGRTLESKKQIVKKIEDLLDNSEMALVLDYKGLSTKEMSDLRSRLQQSDGVCKVTKNTLMRQAIKGKNSWTGLDSLLTGTNAFVLIKGDVGSAVKAVQAFQKETQKSETKGGLFEGKLLSQDEIKAIAKLPSKEALMGQIAGALNSITSKIAIGINEVPSGLARSLKQHSESGES</sequence>
<feature type="chain" id="PRO_1000005556" description="Large ribosomal subunit protein uL10">
    <location>
        <begin position="1"/>
        <end position="175"/>
    </location>
</feature>
<organism>
    <name type="scientific">Prochlorococcus marinus (strain NATL1A)</name>
    <dbReference type="NCBI Taxonomy" id="167555"/>
    <lineage>
        <taxon>Bacteria</taxon>
        <taxon>Bacillati</taxon>
        <taxon>Cyanobacteriota</taxon>
        <taxon>Cyanophyceae</taxon>
        <taxon>Synechococcales</taxon>
        <taxon>Prochlorococcaceae</taxon>
        <taxon>Prochlorococcus</taxon>
    </lineage>
</organism>
<gene>
    <name evidence="1" type="primary">rplJ</name>
    <name evidence="1" type="synonym">rpl10</name>
    <name type="ordered locus">NATL1_02781</name>
</gene>
<evidence type="ECO:0000255" key="1">
    <source>
        <dbReference type="HAMAP-Rule" id="MF_00362"/>
    </source>
</evidence>
<evidence type="ECO:0000305" key="2"/>
<name>RL10_PROM1</name>
<dbReference type="EMBL" id="CP000553">
    <property type="protein sequence ID" value="ABM74842.1"/>
    <property type="molecule type" value="Genomic_DNA"/>
</dbReference>
<dbReference type="RefSeq" id="WP_011823059.1">
    <property type="nucleotide sequence ID" value="NC_008819.1"/>
</dbReference>
<dbReference type="SMR" id="A2C032"/>
<dbReference type="KEGG" id="pme:NATL1_02781"/>
<dbReference type="eggNOG" id="COG0244">
    <property type="taxonomic scope" value="Bacteria"/>
</dbReference>
<dbReference type="HOGENOM" id="CLU_092227_1_1_3"/>
<dbReference type="Proteomes" id="UP000002592">
    <property type="component" value="Chromosome"/>
</dbReference>
<dbReference type="GO" id="GO:0015934">
    <property type="term" value="C:large ribosomal subunit"/>
    <property type="evidence" value="ECO:0007669"/>
    <property type="project" value="InterPro"/>
</dbReference>
<dbReference type="GO" id="GO:0070180">
    <property type="term" value="F:large ribosomal subunit rRNA binding"/>
    <property type="evidence" value="ECO:0007669"/>
    <property type="project" value="UniProtKB-UniRule"/>
</dbReference>
<dbReference type="GO" id="GO:0003735">
    <property type="term" value="F:structural constituent of ribosome"/>
    <property type="evidence" value="ECO:0007669"/>
    <property type="project" value="InterPro"/>
</dbReference>
<dbReference type="GO" id="GO:0006412">
    <property type="term" value="P:translation"/>
    <property type="evidence" value="ECO:0007669"/>
    <property type="project" value="UniProtKB-UniRule"/>
</dbReference>
<dbReference type="CDD" id="cd05797">
    <property type="entry name" value="Ribosomal_L10"/>
    <property type="match status" value="1"/>
</dbReference>
<dbReference type="Gene3D" id="3.30.70.1730">
    <property type="match status" value="1"/>
</dbReference>
<dbReference type="Gene3D" id="6.10.250.290">
    <property type="match status" value="1"/>
</dbReference>
<dbReference type="HAMAP" id="MF_00362">
    <property type="entry name" value="Ribosomal_uL10"/>
    <property type="match status" value="1"/>
</dbReference>
<dbReference type="InterPro" id="IPR001790">
    <property type="entry name" value="Ribosomal_uL10"/>
</dbReference>
<dbReference type="InterPro" id="IPR043141">
    <property type="entry name" value="Ribosomal_uL10-like_sf"/>
</dbReference>
<dbReference type="InterPro" id="IPR022973">
    <property type="entry name" value="Ribosomal_uL10_bac"/>
</dbReference>
<dbReference type="InterPro" id="IPR047865">
    <property type="entry name" value="Ribosomal_uL10_bac_type"/>
</dbReference>
<dbReference type="InterPro" id="IPR002363">
    <property type="entry name" value="Ribosomal_uL10_CS_bac"/>
</dbReference>
<dbReference type="NCBIfam" id="NF000955">
    <property type="entry name" value="PRK00099.1-1"/>
    <property type="match status" value="1"/>
</dbReference>
<dbReference type="PANTHER" id="PTHR11560">
    <property type="entry name" value="39S RIBOSOMAL PROTEIN L10, MITOCHONDRIAL"/>
    <property type="match status" value="1"/>
</dbReference>
<dbReference type="Pfam" id="PF00466">
    <property type="entry name" value="Ribosomal_L10"/>
    <property type="match status" value="1"/>
</dbReference>
<dbReference type="SUPFAM" id="SSF160369">
    <property type="entry name" value="Ribosomal protein L10-like"/>
    <property type="match status" value="1"/>
</dbReference>
<dbReference type="PROSITE" id="PS01109">
    <property type="entry name" value="RIBOSOMAL_L10"/>
    <property type="match status" value="1"/>
</dbReference>
<accession>A2C032</accession>
<comment type="function">
    <text evidence="1">Forms part of the ribosomal stalk, playing a central role in the interaction of the ribosome with GTP-bound translation factors.</text>
</comment>
<comment type="subunit">
    <text evidence="1">Part of the ribosomal stalk of the 50S ribosomal subunit. The N-terminus interacts with L11 and the large rRNA to form the base of the stalk. The C-terminus forms an elongated spine to which L12 dimers bind in a sequential fashion forming a multimeric L10(L12)X complex.</text>
</comment>
<comment type="similarity">
    <text evidence="1">Belongs to the universal ribosomal protein uL10 family.</text>
</comment>